<dbReference type="EMBL" id="AB098957">
    <property type="protein sequence ID" value="BAC56447.1"/>
    <property type="status" value="ALT_FRAME"/>
    <property type="molecule type" value="mRNA"/>
</dbReference>
<dbReference type="EMBL" id="BC102248">
    <property type="protein sequence ID" value="AAI02249.1"/>
    <property type="molecule type" value="mRNA"/>
</dbReference>
<dbReference type="RefSeq" id="NP_001069831.1">
    <property type="nucleotide sequence ID" value="NM_001076363.2"/>
</dbReference>
<dbReference type="PDB" id="4LJO">
    <property type="method" value="X-ray"/>
    <property type="resolution" value="1.56 A"/>
    <property type="chains" value="B=1-76"/>
</dbReference>
<dbReference type="PDB" id="4LJP">
    <property type="method" value="X-ray"/>
    <property type="resolution" value="2.15 A"/>
    <property type="chains" value="B=1-76"/>
</dbReference>
<dbReference type="PDB" id="4S22">
    <property type="method" value="X-ray"/>
    <property type="resolution" value="2.30 A"/>
    <property type="chains" value="A/B/C/D=1-76"/>
</dbReference>
<dbReference type="PDB" id="6ZVK">
    <property type="method" value="EM"/>
    <property type="resolution" value="3.49 A"/>
    <property type="chains" value="E2=77-128"/>
</dbReference>
<dbReference type="PDB" id="7A01">
    <property type="method" value="EM"/>
    <property type="resolution" value="3.60 A"/>
    <property type="chains" value="E2=77-128"/>
</dbReference>
<dbReference type="PDB" id="7NFX">
    <property type="method" value="EM"/>
    <property type="resolution" value="3.20 A"/>
    <property type="chains" value="m=77-128"/>
</dbReference>
<dbReference type="PDB" id="7OBR">
    <property type="method" value="EM"/>
    <property type="resolution" value="2.80 A"/>
    <property type="chains" value="m=77-128"/>
</dbReference>
<dbReference type="PDBsum" id="4LJO"/>
<dbReference type="PDBsum" id="4LJP"/>
<dbReference type="PDBsum" id="4S22"/>
<dbReference type="PDBsum" id="6ZVK"/>
<dbReference type="PDBsum" id="7A01"/>
<dbReference type="PDBsum" id="7NFX"/>
<dbReference type="PDBsum" id="7OBR"/>
<dbReference type="EMDB" id="EMD-11459"/>
<dbReference type="EMDB" id="EMD-11590"/>
<dbReference type="EMDB" id="EMD-12303"/>
<dbReference type="EMDB" id="EMD-12801"/>
<dbReference type="SASBDB" id="P63048"/>
<dbReference type="SMR" id="P63048"/>
<dbReference type="FunCoup" id="P63048">
    <property type="interactions" value="2902"/>
</dbReference>
<dbReference type="STRING" id="9913.ENSBTAP00000010176"/>
<dbReference type="PaxDb" id="9913-ENSBTAP00000010176"/>
<dbReference type="ABCD" id="P63048">
    <property type="antibodies" value="3 sequenced antibodies"/>
</dbReference>
<dbReference type="Ensembl" id="ENSBTAT00000010176.3">
    <property type="protein sequence ID" value="ENSBTAP00000010176.2"/>
    <property type="gene ID" value="ENSBTAG00000007737.3"/>
</dbReference>
<dbReference type="GeneID" id="615199"/>
<dbReference type="KEGG" id="bta:615199"/>
<dbReference type="CTD" id="7311"/>
<dbReference type="VEuPathDB" id="HostDB:ENSBTAG00000007737"/>
<dbReference type="VGNC" id="VGNC:49988">
    <property type="gene designation" value="UBA52"/>
</dbReference>
<dbReference type="eggNOG" id="KOG0003">
    <property type="taxonomic scope" value="Eukaryota"/>
</dbReference>
<dbReference type="GeneTree" id="ENSGT00940000153593"/>
<dbReference type="HOGENOM" id="CLU_010412_3_4_1"/>
<dbReference type="InParanoid" id="P63048"/>
<dbReference type="OMA" id="CGRCSQL"/>
<dbReference type="OrthoDB" id="428577at2759"/>
<dbReference type="TreeFam" id="TF352129"/>
<dbReference type="Reactome" id="R-BTA-110312">
    <property type="pathway name" value="Translesion synthesis by REV1"/>
</dbReference>
<dbReference type="Reactome" id="R-BTA-110314">
    <property type="pathway name" value="Recognition of DNA damage by PCNA-containing replication complex"/>
</dbReference>
<dbReference type="Reactome" id="R-BTA-110320">
    <property type="pathway name" value="Translesion Synthesis by POLH"/>
</dbReference>
<dbReference type="Reactome" id="R-BTA-1169091">
    <property type="pathway name" value="Activation of NF-kappaB in B cells"/>
</dbReference>
<dbReference type="Reactome" id="R-BTA-1234176">
    <property type="pathway name" value="Oxygen-dependent proline hydroxylation of Hypoxia-inducible Factor Alpha"/>
</dbReference>
<dbReference type="Reactome" id="R-BTA-1253288">
    <property type="pathway name" value="Downregulation of ERBB4 signaling"/>
</dbReference>
<dbReference type="Reactome" id="R-BTA-1295596">
    <property type="pathway name" value="Spry regulation of FGF signaling"/>
</dbReference>
<dbReference type="Reactome" id="R-BTA-1358803">
    <property type="pathway name" value="Downregulation of ERBB2:ERBB3 signaling"/>
</dbReference>
<dbReference type="Reactome" id="R-BTA-156827">
    <property type="pathway name" value="L13a-mediated translational silencing of Ceruloplasmin expression"/>
</dbReference>
<dbReference type="Reactome" id="R-BTA-168638">
    <property type="pathway name" value="NOD1/2 Signaling Pathway"/>
</dbReference>
<dbReference type="Reactome" id="R-BTA-174048">
    <property type="pathway name" value="APC/C:Cdc20 mediated degradation of Cyclin B"/>
</dbReference>
<dbReference type="Reactome" id="R-BTA-174084">
    <property type="pathway name" value="Autodegradation of Cdh1 by Cdh1:APC/C"/>
</dbReference>
<dbReference type="Reactome" id="R-BTA-174113">
    <property type="pathway name" value="SCF-beta-TrCP mediated degradation of Emi1"/>
</dbReference>
<dbReference type="Reactome" id="R-BTA-174154">
    <property type="pathway name" value="APC/C:Cdc20 mediated degradation of Securin"/>
</dbReference>
<dbReference type="Reactome" id="R-BTA-174178">
    <property type="pathway name" value="APC/C:Cdh1 mediated degradation of Cdc20 and other APC/C:Cdh1 targeted proteins in late mitosis/early G1"/>
</dbReference>
<dbReference type="Reactome" id="R-BTA-174184">
    <property type="pathway name" value="Cdc20:Phospho-APC/C mediated degradation of Cyclin A"/>
</dbReference>
<dbReference type="Reactome" id="R-BTA-179409">
    <property type="pathway name" value="APC-Cdc20 mediated degradation of Nek2A"/>
</dbReference>
<dbReference type="Reactome" id="R-BTA-1799339">
    <property type="pathway name" value="SRP-dependent cotranslational protein targeting to membrane"/>
</dbReference>
<dbReference type="Reactome" id="R-BTA-182971">
    <property type="pathway name" value="EGFR downregulation"/>
</dbReference>
<dbReference type="Reactome" id="R-BTA-187577">
    <property type="pathway name" value="SCF(Skp2)-mediated degradation of p27/p21"/>
</dbReference>
<dbReference type="Reactome" id="R-BTA-195253">
    <property type="pathway name" value="Degradation of beta-catenin by the destruction complex"/>
</dbReference>
<dbReference type="Reactome" id="R-BTA-201681">
    <property type="pathway name" value="TCF dependent signaling in response to WNT"/>
</dbReference>
<dbReference type="Reactome" id="R-BTA-202424">
    <property type="pathway name" value="Downstream TCR signaling"/>
</dbReference>
<dbReference type="Reactome" id="R-BTA-205043">
    <property type="pathway name" value="NRIF signals cell death from the nucleus"/>
</dbReference>
<dbReference type="Reactome" id="R-BTA-209543">
    <property type="pathway name" value="p75NTR recruits signalling complexes"/>
</dbReference>
<dbReference type="Reactome" id="R-BTA-209560">
    <property type="pathway name" value="NF-kB is activated and signals survival"/>
</dbReference>
<dbReference type="Reactome" id="R-BTA-2122948">
    <property type="pathway name" value="Activated NOTCH1 Transmits Signal to the Nucleus"/>
</dbReference>
<dbReference type="Reactome" id="R-BTA-2173788">
    <property type="pathway name" value="Downregulation of TGF-beta receptor signaling"/>
</dbReference>
<dbReference type="Reactome" id="R-BTA-2173791">
    <property type="pathway name" value="TGF-beta receptor signaling in EMT (epithelial to mesenchymal transition)"/>
</dbReference>
<dbReference type="Reactome" id="R-BTA-2173795">
    <property type="pathway name" value="Downregulation of SMAD2/3:SMAD4 transcriptional activity"/>
</dbReference>
<dbReference type="Reactome" id="R-BTA-2173796">
    <property type="pathway name" value="SMAD2/SMAD3:SMAD4 heterotrimer regulates transcription"/>
</dbReference>
<dbReference type="Reactome" id="R-BTA-2467813">
    <property type="pathway name" value="Separation of Sister Chromatids"/>
</dbReference>
<dbReference type="Reactome" id="R-BTA-2559582">
    <property type="pathway name" value="Senescence-Associated Secretory Phenotype (SASP)"/>
</dbReference>
<dbReference type="Reactome" id="R-BTA-2565942">
    <property type="pathway name" value="Regulation of PLK1 Activity at G2/M Transition"/>
</dbReference>
<dbReference type="Reactome" id="R-BTA-2871837">
    <property type="pathway name" value="FCERI mediated NF-kB activation"/>
</dbReference>
<dbReference type="Reactome" id="R-BTA-3134975">
    <property type="pathway name" value="Regulation of innate immune responses to cytosolic DNA"/>
</dbReference>
<dbReference type="Reactome" id="R-BTA-349425">
    <property type="pathway name" value="Autodegradation of the E3 ubiquitin ligase COP1"/>
</dbReference>
<dbReference type="Reactome" id="R-BTA-3769402">
    <property type="pathway name" value="Deactivation of the beta-catenin transactivating complex"/>
</dbReference>
<dbReference type="Reactome" id="R-BTA-382556">
    <property type="pathway name" value="ABC-family proteins mediated transport"/>
</dbReference>
<dbReference type="Reactome" id="R-BTA-450302">
    <property type="pathway name" value="activated TAK1 mediates p38 MAPK activation"/>
</dbReference>
<dbReference type="Reactome" id="R-BTA-450321">
    <property type="pathway name" value="JNK (c-Jun kinases) phosphorylation and activation mediated by activated human TAK1"/>
</dbReference>
<dbReference type="Reactome" id="R-BTA-450408">
    <property type="pathway name" value="AUF1 (hnRNP D0) binds and destabilizes mRNA"/>
</dbReference>
<dbReference type="Reactome" id="R-BTA-4608870">
    <property type="pathway name" value="Asymmetric localization of PCP proteins"/>
</dbReference>
<dbReference type="Reactome" id="R-BTA-4641257">
    <property type="pathway name" value="Degradation of AXIN"/>
</dbReference>
<dbReference type="Reactome" id="R-BTA-4641258">
    <property type="pathway name" value="Degradation of DVL"/>
</dbReference>
<dbReference type="Reactome" id="R-BTA-4641263">
    <property type="pathway name" value="Regulation of FZD by ubiquitination"/>
</dbReference>
<dbReference type="Reactome" id="R-BTA-532668">
    <property type="pathway name" value="N-glycan trimming in the ER and Calnexin/Calreticulin cycle"/>
</dbReference>
<dbReference type="Reactome" id="R-BTA-5357905">
    <property type="pathway name" value="Regulation of TNFR1 signaling"/>
</dbReference>
<dbReference type="Reactome" id="R-BTA-5357956">
    <property type="pathway name" value="TNFR1-induced NF-kappa-B signaling pathway"/>
</dbReference>
<dbReference type="Reactome" id="R-BTA-5358346">
    <property type="pathway name" value="Hedgehog ligand biogenesis"/>
</dbReference>
<dbReference type="Reactome" id="R-BTA-5607761">
    <property type="pathway name" value="Dectin-1 mediated noncanonical NF-kB signaling"/>
</dbReference>
<dbReference type="Reactome" id="R-BTA-5607764">
    <property type="pathway name" value="CLEC7A (Dectin-1) signaling"/>
</dbReference>
<dbReference type="Reactome" id="R-BTA-5610780">
    <property type="pathway name" value="Degradation of GLI1 by the proteasome"/>
</dbReference>
<dbReference type="Reactome" id="R-BTA-5610785">
    <property type="pathway name" value="GLI3 is processed to GLI3R by the proteasome"/>
</dbReference>
<dbReference type="Reactome" id="R-BTA-5632684">
    <property type="pathway name" value="Hedgehog 'on' state"/>
</dbReference>
<dbReference type="Reactome" id="R-BTA-5654726">
    <property type="pathway name" value="Negative regulation of FGFR1 signaling"/>
</dbReference>
<dbReference type="Reactome" id="R-BTA-5654727">
    <property type="pathway name" value="Negative regulation of FGFR2 signaling"/>
</dbReference>
<dbReference type="Reactome" id="R-BTA-5654732">
    <property type="pathway name" value="Negative regulation of FGFR3 signaling"/>
</dbReference>
<dbReference type="Reactome" id="R-BTA-5654733">
    <property type="pathway name" value="Negative regulation of FGFR4 signaling"/>
</dbReference>
<dbReference type="Reactome" id="R-BTA-5655862">
    <property type="pathway name" value="Translesion synthesis by POLK"/>
</dbReference>
<dbReference type="Reactome" id="R-BTA-5656121">
    <property type="pathway name" value="Translesion synthesis by POLI"/>
</dbReference>
<dbReference type="Reactome" id="R-BTA-5656169">
    <property type="pathway name" value="Termination of translesion DNA synthesis"/>
</dbReference>
<dbReference type="Reactome" id="R-BTA-5668541">
    <property type="pathway name" value="TNFR2 non-canonical NF-kB pathway"/>
</dbReference>
<dbReference type="Reactome" id="R-BTA-5675221">
    <property type="pathway name" value="Negative regulation of MAPK pathway"/>
</dbReference>
<dbReference type="Reactome" id="R-BTA-5675482">
    <property type="pathway name" value="Regulation of necroptotic cell death"/>
</dbReference>
<dbReference type="Reactome" id="R-BTA-5676590">
    <property type="pathway name" value="NIK--&gt;noncanonical NF-kB signaling"/>
</dbReference>
<dbReference type="Reactome" id="R-BTA-5684264">
    <property type="pathway name" value="MAP3K8 (TPL2)-dependent MAPK1/3 activation"/>
</dbReference>
<dbReference type="Reactome" id="R-BTA-5685942">
    <property type="pathway name" value="HDR through Homologous Recombination (HRR)"/>
</dbReference>
<dbReference type="Reactome" id="R-BTA-5687128">
    <property type="pathway name" value="MAPK6/MAPK4 signaling"/>
</dbReference>
<dbReference type="Reactome" id="R-BTA-5689603">
    <property type="pathway name" value="UCH proteinases"/>
</dbReference>
<dbReference type="Reactome" id="R-BTA-5689877">
    <property type="pathway name" value="Josephin domain DUBs"/>
</dbReference>
<dbReference type="Reactome" id="R-BTA-5689880">
    <property type="pathway name" value="Ub-specific processing proteases"/>
</dbReference>
<dbReference type="Reactome" id="R-BTA-5689896">
    <property type="pathway name" value="Ovarian tumor domain proteases"/>
</dbReference>
<dbReference type="Reactome" id="R-BTA-5689901">
    <property type="pathway name" value="Metalloprotease DUBs"/>
</dbReference>
<dbReference type="Reactome" id="R-BTA-5693565">
    <property type="pathway name" value="Recruitment and ATM-mediated phosphorylation of repair and signaling proteins at DNA double strand breaks"/>
</dbReference>
<dbReference type="Reactome" id="R-BTA-5693607">
    <property type="pathway name" value="Processing of DNA double-strand break ends"/>
</dbReference>
<dbReference type="Reactome" id="R-BTA-5696394">
    <property type="pathway name" value="DNA Damage Recognition in GG-NER"/>
</dbReference>
<dbReference type="Reactome" id="R-BTA-5696395">
    <property type="pathway name" value="Formation of Incision Complex in GG-NER"/>
</dbReference>
<dbReference type="Reactome" id="R-BTA-5696397">
    <property type="pathway name" value="Gap-filling DNA repair synthesis and ligation in GG-NER"/>
</dbReference>
<dbReference type="Reactome" id="R-BTA-5696400">
    <property type="pathway name" value="Dual Incision in GG-NER"/>
</dbReference>
<dbReference type="Reactome" id="R-BTA-6781823">
    <property type="pathway name" value="Formation of TC-NER Pre-Incision Complex"/>
</dbReference>
<dbReference type="Reactome" id="R-BTA-6782135">
    <property type="pathway name" value="Dual incision in TC-NER"/>
</dbReference>
<dbReference type="Reactome" id="R-BTA-6782210">
    <property type="pathway name" value="Gap-filling DNA repair synthesis and ligation in TC-NER"/>
</dbReference>
<dbReference type="Reactome" id="R-BTA-6783310">
    <property type="pathway name" value="Fanconi Anemia Pathway"/>
</dbReference>
<dbReference type="Reactome" id="R-BTA-6791226">
    <property type="pathway name" value="Major pathway of rRNA processing in the nucleolus and cytosol"/>
</dbReference>
<dbReference type="Reactome" id="R-BTA-6804756">
    <property type="pathway name" value="Regulation of TP53 Activity through Phosphorylation"/>
</dbReference>
<dbReference type="Reactome" id="R-BTA-6804757">
    <property type="pathway name" value="Regulation of TP53 Degradation"/>
</dbReference>
<dbReference type="Reactome" id="R-BTA-6804760">
    <property type="pathway name" value="Regulation of TP53 Activity through Methylation"/>
</dbReference>
<dbReference type="Reactome" id="R-BTA-6807004">
    <property type="pathway name" value="Negative regulation of MET activity"/>
</dbReference>
<dbReference type="Reactome" id="R-BTA-68867">
    <property type="pathway name" value="Assembly of the pre-replicative complex"/>
</dbReference>
<dbReference type="Reactome" id="R-BTA-68949">
    <property type="pathway name" value="Orc1 removal from chromatin"/>
</dbReference>
<dbReference type="Reactome" id="R-BTA-69017">
    <property type="pathway name" value="CDK-mediated phosphorylation and removal of Cdc6"/>
</dbReference>
<dbReference type="Reactome" id="R-BTA-69231">
    <property type="pathway name" value="Cyclin D associated events in G1"/>
</dbReference>
<dbReference type="Reactome" id="R-BTA-69481">
    <property type="pathway name" value="G2/M Checkpoints"/>
</dbReference>
<dbReference type="Reactome" id="R-BTA-69601">
    <property type="pathway name" value="Ubiquitin Mediated Degradation of Phosphorylated Cdc25A"/>
</dbReference>
<dbReference type="Reactome" id="R-BTA-72689">
    <property type="pathway name" value="Formation of a pool of free 40S subunits"/>
</dbReference>
<dbReference type="Reactome" id="R-BTA-72706">
    <property type="pathway name" value="GTP hydrolysis and joining of the 60S ribosomal subunit"/>
</dbReference>
<dbReference type="Reactome" id="R-BTA-75815">
    <property type="pathway name" value="Ubiquitin-dependent degradation of Cyclin D"/>
</dbReference>
<dbReference type="Reactome" id="R-BTA-8849469">
    <property type="pathway name" value="PTK6 Regulates RTKs and Their Effectors AKT1 and DOK1"/>
</dbReference>
<dbReference type="Reactome" id="R-BTA-8852276">
    <property type="pathway name" value="The role of GTSE1 in G2/M progression after G2 checkpoint"/>
</dbReference>
<dbReference type="Reactome" id="R-BTA-8854050">
    <property type="pathway name" value="FBXL7 down-regulates AURKA during mitotic entry and in early mitosis"/>
</dbReference>
<dbReference type="Reactome" id="R-BTA-8856825">
    <property type="pathway name" value="Cargo recognition for clathrin-mediated endocytosis"/>
</dbReference>
<dbReference type="Reactome" id="R-BTA-8856828">
    <property type="pathway name" value="Clathrin-mediated endocytosis"/>
</dbReference>
<dbReference type="Reactome" id="R-BTA-8863795">
    <property type="pathway name" value="Downregulation of ERBB2 signaling"/>
</dbReference>
<dbReference type="Reactome" id="R-BTA-8866427">
    <property type="pathway name" value="VLDLR internalisation and degradation"/>
</dbReference>
<dbReference type="Reactome" id="R-BTA-8866652">
    <property type="pathway name" value="Synthesis of active ubiquitin: roles of E1 and E2 enzymes"/>
</dbReference>
<dbReference type="Reactome" id="R-BTA-8866654">
    <property type="pathway name" value="E3 ubiquitin ligases ubiquitinate target proteins"/>
</dbReference>
<dbReference type="Reactome" id="R-BTA-8939236">
    <property type="pathway name" value="RUNX1 regulates transcription of genes involved in differentiation of HSCs"/>
</dbReference>
<dbReference type="Reactome" id="R-BTA-8939902">
    <property type="pathway name" value="Regulation of RUNX2 expression and activity"/>
</dbReference>
<dbReference type="Reactome" id="R-BTA-8941858">
    <property type="pathway name" value="Regulation of RUNX3 expression and activity"/>
</dbReference>
<dbReference type="Reactome" id="R-BTA-8948747">
    <property type="pathway name" value="Regulation of PTEN localization"/>
</dbReference>
<dbReference type="Reactome" id="R-BTA-8948751">
    <property type="pathway name" value="Regulation of PTEN stability and activity"/>
</dbReference>
<dbReference type="Reactome" id="R-BTA-8951664">
    <property type="pathway name" value="Neddylation"/>
</dbReference>
<dbReference type="Reactome" id="R-BTA-901032">
    <property type="pathway name" value="ER Quality Control Compartment (ERQC)"/>
</dbReference>
<dbReference type="Reactome" id="R-BTA-9010553">
    <property type="pathway name" value="Regulation of expression of SLITs and ROBOs"/>
</dbReference>
<dbReference type="Reactome" id="R-BTA-9020702">
    <property type="pathway name" value="Interleukin-1 signaling"/>
</dbReference>
<dbReference type="Reactome" id="R-BTA-9033241">
    <property type="pathway name" value="Peroxisomal protein import"/>
</dbReference>
<dbReference type="Reactome" id="R-BTA-909733">
    <property type="pathway name" value="Interferon alpha/beta signaling"/>
</dbReference>
<dbReference type="Reactome" id="R-BTA-912631">
    <property type="pathway name" value="Regulation of signaling by CBL"/>
</dbReference>
<dbReference type="Reactome" id="R-BTA-917729">
    <property type="pathway name" value="Endosomal Sorting Complex Required For Transport (ESCRT)"/>
</dbReference>
<dbReference type="Reactome" id="R-BTA-917937">
    <property type="pathway name" value="Iron uptake and transport"/>
</dbReference>
<dbReference type="Reactome" id="R-BTA-936440">
    <property type="pathway name" value="Negative regulators of DDX58/IFIH1 signaling"/>
</dbReference>
<dbReference type="Reactome" id="R-BTA-936964">
    <property type="pathway name" value="Activation of IRF3, IRF7 mediated by TBK1, IKKEpsilon (IKBKE)"/>
</dbReference>
<dbReference type="Reactome" id="R-BTA-937041">
    <property type="pathway name" value="IKK complex recruitment mediated by RIP1"/>
</dbReference>
<dbReference type="Reactome" id="R-BTA-937042">
    <property type="pathway name" value="IRAK2 mediated activation of TAK1 complex"/>
</dbReference>
<dbReference type="Reactome" id="R-BTA-937072">
    <property type="pathway name" value="TRAF6-mediated induction of TAK1 complex within TLR4 complex"/>
</dbReference>
<dbReference type="Reactome" id="R-BTA-9645460">
    <property type="pathway name" value="Alpha-protein kinase 1 signaling pathway"/>
</dbReference>
<dbReference type="Reactome" id="R-BTA-9646399">
    <property type="pathway name" value="Aggrephagy"/>
</dbReference>
<dbReference type="Reactome" id="R-BTA-9648002">
    <property type="pathway name" value="RAS processing"/>
</dbReference>
<dbReference type="Reactome" id="R-BTA-9664873">
    <property type="pathway name" value="Pexophagy"/>
</dbReference>
<dbReference type="Reactome" id="R-BTA-9705462">
    <property type="pathway name" value="Inactivation of CSF3 (G-CSF) signaling"/>
</dbReference>
<dbReference type="Reactome" id="R-BTA-9706369">
    <property type="pathway name" value="Negative regulation of FLT3"/>
</dbReference>
<dbReference type="Reactome" id="R-BTA-9708530">
    <property type="pathway name" value="Regulation of BACH1 activity"/>
</dbReference>
<dbReference type="Reactome" id="R-BTA-975163">
    <property type="pathway name" value="IRAK2 mediated activation of TAK1 complex upon TLR7/8 or 9 stimulation"/>
</dbReference>
<dbReference type="Reactome" id="R-BTA-9755511">
    <property type="pathway name" value="KEAP1-NFE2L2 pathway"/>
</dbReference>
<dbReference type="Reactome" id="R-BTA-9758274">
    <property type="pathway name" value="Regulation of NF-kappa B signaling"/>
</dbReference>
<dbReference type="Reactome" id="R-BTA-975956">
    <property type="pathway name" value="Nonsense Mediated Decay (NMD) independent of the Exon Junction Complex (EJC)"/>
</dbReference>
<dbReference type="Reactome" id="R-BTA-975957">
    <property type="pathway name" value="Nonsense Mediated Decay (NMD) enhanced by the Exon Junction Complex (EJC)"/>
</dbReference>
<dbReference type="Reactome" id="R-BTA-9762114">
    <property type="pathway name" value="GSK3B and BTRC:CUL1-mediated-degradation of NFE2L2"/>
</dbReference>
<dbReference type="Reactome" id="R-BTA-9824878">
    <property type="pathway name" value="Regulation of TBK1, IKKEpsilon (IKBKE)-mediated activation of IRF3, IRF7"/>
</dbReference>
<dbReference type="Reactome" id="R-BTA-983168">
    <property type="pathway name" value="Antigen processing: Ubiquitination &amp; Proteasome degradation"/>
</dbReference>
<dbReference type="Reactome" id="R-BTA-9861718">
    <property type="pathway name" value="Regulation of pyruvate metabolism"/>
</dbReference>
<dbReference type="EvolutionaryTrace" id="P63048"/>
<dbReference type="Proteomes" id="UP000009136">
    <property type="component" value="Chromosome 7"/>
</dbReference>
<dbReference type="Bgee" id="ENSBTAG00000007737">
    <property type="expression patterns" value="Expressed in laryngeal cartilage and 107 other cell types or tissues"/>
</dbReference>
<dbReference type="GO" id="GO:0005737">
    <property type="term" value="C:cytoplasm"/>
    <property type="evidence" value="ECO:0000318"/>
    <property type="project" value="GO_Central"/>
</dbReference>
<dbReference type="GO" id="GO:0022625">
    <property type="term" value="C:cytosolic large ribosomal subunit"/>
    <property type="evidence" value="ECO:0007669"/>
    <property type="project" value="Ensembl"/>
</dbReference>
<dbReference type="GO" id="GO:0005634">
    <property type="term" value="C:nucleus"/>
    <property type="evidence" value="ECO:0000318"/>
    <property type="project" value="GO_Central"/>
</dbReference>
<dbReference type="GO" id="GO:0045202">
    <property type="term" value="C:synapse"/>
    <property type="evidence" value="ECO:0007669"/>
    <property type="project" value="Ensembl"/>
</dbReference>
<dbReference type="GO" id="GO:0031386">
    <property type="term" value="F:protein tag activity"/>
    <property type="evidence" value="ECO:0000318"/>
    <property type="project" value="GO_Central"/>
</dbReference>
<dbReference type="GO" id="GO:0003735">
    <property type="term" value="F:structural constituent of ribosome"/>
    <property type="evidence" value="ECO:0000318"/>
    <property type="project" value="GO_Central"/>
</dbReference>
<dbReference type="GO" id="GO:0031625">
    <property type="term" value="F:ubiquitin protein ligase binding"/>
    <property type="evidence" value="ECO:0000318"/>
    <property type="project" value="GO_Central"/>
</dbReference>
<dbReference type="GO" id="GO:0002181">
    <property type="term" value="P:cytoplasmic translation"/>
    <property type="evidence" value="ECO:0007669"/>
    <property type="project" value="Ensembl"/>
</dbReference>
<dbReference type="GO" id="GO:0019941">
    <property type="term" value="P:modification-dependent protein catabolic process"/>
    <property type="evidence" value="ECO:0000318"/>
    <property type="project" value="GO_Central"/>
</dbReference>
<dbReference type="GO" id="GO:0016567">
    <property type="term" value="P:protein ubiquitination"/>
    <property type="evidence" value="ECO:0000318"/>
    <property type="project" value="GO_Central"/>
</dbReference>
<dbReference type="CDD" id="cd01803">
    <property type="entry name" value="Ubl_ubiquitin"/>
    <property type="match status" value="1"/>
</dbReference>
<dbReference type="FunFam" id="3.10.20.90:FF:000014">
    <property type="entry name" value="Ubiquitin-60S ribosomal L40 fusion"/>
    <property type="match status" value="1"/>
</dbReference>
<dbReference type="FunFam" id="4.10.1060.50:FF:000001">
    <property type="entry name" value="ubiquitin-60S ribosomal protein L40"/>
    <property type="match status" value="1"/>
</dbReference>
<dbReference type="Gene3D" id="4.10.1060.50">
    <property type="match status" value="1"/>
</dbReference>
<dbReference type="Gene3D" id="3.10.20.90">
    <property type="entry name" value="Phosphatidylinositol 3-kinase Catalytic Subunit, Chain A, domain 1"/>
    <property type="match status" value="1"/>
</dbReference>
<dbReference type="InterPro" id="IPR001975">
    <property type="entry name" value="Ribosomal_eL40_dom"/>
</dbReference>
<dbReference type="InterPro" id="IPR038587">
    <property type="entry name" value="Ribosomal_eL40_sf"/>
</dbReference>
<dbReference type="InterPro" id="IPR000626">
    <property type="entry name" value="Ubiquitin-like_dom"/>
</dbReference>
<dbReference type="InterPro" id="IPR029071">
    <property type="entry name" value="Ubiquitin-like_domsf"/>
</dbReference>
<dbReference type="InterPro" id="IPR019954">
    <property type="entry name" value="Ubiquitin_CS"/>
</dbReference>
<dbReference type="InterPro" id="IPR019956">
    <property type="entry name" value="Ubiquitin_dom"/>
</dbReference>
<dbReference type="InterPro" id="IPR050158">
    <property type="entry name" value="Ubiquitin_ubiquitin-like"/>
</dbReference>
<dbReference type="PANTHER" id="PTHR10666">
    <property type="entry name" value="UBIQUITIN"/>
    <property type="match status" value="1"/>
</dbReference>
<dbReference type="Pfam" id="PF01020">
    <property type="entry name" value="Ribosomal_L40e"/>
    <property type="match status" value="1"/>
</dbReference>
<dbReference type="Pfam" id="PF00240">
    <property type="entry name" value="ubiquitin"/>
    <property type="match status" value="1"/>
</dbReference>
<dbReference type="PRINTS" id="PR00348">
    <property type="entry name" value="UBIQUITIN"/>
</dbReference>
<dbReference type="SMART" id="SM01377">
    <property type="entry name" value="Ribosomal_L40e"/>
    <property type="match status" value="1"/>
</dbReference>
<dbReference type="SMART" id="SM00213">
    <property type="entry name" value="UBQ"/>
    <property type="match status" value="1"/>
</dbReference>
<dbReference type="SUPFAM" id="SSF54236">
    <property type="entry name" value="Ubiquitin-like"/>
    <property type="match status" value="1"/>
</dbReference>
<dbReference type="PROSITE" id="PS00299">
    <property type="entry name" value="UBIQUITIN_1"/>
    <property type="match status" value="1"/>
</dbReference>
<dbReference type="PROSITE" id="PS50053">
    <property type="entry name" value="UBIQUITIN_2"/>
    <property type="match status" value="1"/>
</dbReference>
<sequence length="128" mass="14728">MQIFVKTLTGKTITLEVEPSDTIENVKAKIQDKEGIPPDQQRLIFAGKQLEDGRTLSDYNIQKESTLHLVLRLRGGIIEPSLRQLAQKYNCDKMICRKCYARLHPRAVNCRKKKCGHTNNLRPKKKVK</sequence>
<gene>
    <name type="primary">UBA52</name>
    <name type="synonym">UBCEP2</name>
</gene>
<name>RL40_BOVIN</name>
<comment type="function">
    <molecule>Ubiquitin</molecule>
    <text evidence="4">Exists either covalently attached to another protein, or free (unanchored). When covalently bound, it is conjugated to target proteins via an isopeptide bond either as a monomer (monoubiquitin), a polymer linked via different Lys residues of the ubiquitin (polyubiquitin chains) or a linear polymer linked via the initiator Met of the ubiquitin (linear polyubiquitin chains). Polyubiquitin chains, when attached to a target protein, have different functions depending on the Lys residue of the ubiquitin that is linked: Lys-6-linked may be involved in DNA repair; Lys-11-linked is involved in ERAD (endoplasmic reticulum-associated degradation) and in cell-cycle regulation; Lys-29-linked is involved in proteotoxic stress response and cell cycle; Lys-33-linked is involved in kinase modification; Lys-48-linked is involved in protein degradation via the proteasome; Lys-63-linked is involved in endocytosis, DNA-damage responses as well as in signaling processes leading to activation of the transcription factor NF-kappa-B. Linear polymer chains formed via attachment by the initiator Met lead to cell signaling. Ubiquitin is usually conjugated to Lys residues of target proteins, however, in rare cases, conjugation to Cys or Ser residues has been observed. When polyubiquitin is free (unanchored-polyubiquitin), it also has distinct roles, such as in activation of protein kinases, and in signaling.</text>
</comment>
<comment type="function">
    <molecule>Large ribosomal subunit protein eL40</molecule>
    <text evidence="4">Component of the 60S subunit of the ribosome. Ribosomal protein L40 is essential for translation of a subset of cellular transcripts, and especially for cap-dependent translation of vesicular stomatitis virus mRNAs.</text>
</comment>
<comment type="subunit">
    <molecule>Large ribosomal subunit protein eL40</molecule>
    <text evidence="4">Part of the 60S ribosomal subunit. Interacts with UBQLN1 (via UBA domain).</text>
</comment>
<comment type="subcellular location">
    <molecule>Ubiquitin</molecule>
    <subcellularLocation>
        <location evidence="1">Cytoplasm</location>
    </subcellularLocation>
    <subcellularLocation>
        <location evidence="1">Nucleus</location>
    </subcellularLocation>
</comment>
<comment type="subcellular location">
    <molecule>Large ribosomal subunit protein eL40</molecule>
    <subcellularLocation>
        <location evidence="2">Cytoplasm</location>
    </subcellularLocation>
</comment>
<comment type="PTM">
    <molecule>Ubiquitin</molecule>
    <text evidence="4">Phosphorylated at Ser-65 by PINK1 during mitophagy. Phosphorylated ubiquitin specifically binds and activates parkin (PRKN), triggering mitophagy. Phosphorylation does not affect E1-mediated E2 charging of ubiquitin but affects discharging of E2 enzymes to form polyubiquitin chains. It also affects deubiquitination by deubiquitinase enzymes such as USP30.</text>
</comment>
<comment type="PTM">
    <molecule>Ubiquitin</molecule>
    <text evidence="4">Mono-ADP-ribosylated at the C-terminus by PARP9, a component of the PPAR9-DTX3L complex. ADP-ribosylation requires processing by E1 and E2 enzymes and prevents ubiquitin conjugation to substrates such as histones.</text>
</comment>
<comment type="PTM">
    <molecule>Large ribosomal subunit protein eL40</molecule>
    <text evidence="4">Trimethylation of Lys-98 ('Lys-22' of the mature chain) by SMYD5 promotes translation elongation and protein synthesis.</text>
</comment>
<comment type="miscellaneous">
    <text>Ubiquitin is encoded by 4 different genes. Uba52 and Rps27a genes code for a single copy of ubiquitin fused to the ribosomal proteins eL40 and eS31, respectively. UBB and UBC genes code for a polyubiquitin precursor with exact head to tail repeats, the number of repeats differ between species and strains.</text>
</comment>
<comment type="similarity">
    <text evidence="6">In the N-terminal section; belongs to the ubiquitin family.</text>
</comment>
<comment type="similarity">
    <text evidence="6">In the C-terminal section; belongs to the eukaryotic ribosomal protein eL40 family.</text>
</comment>
<comment type="sequence caution" evidence="6">
    <conflict type="frameshift">
        <sequence resource="EMBL-CDS" id="BAC56447"/>
    </conflict>
</comment>
<reference key="1">
    <citation type="journal article" date="2003" name="Mol. Reprod. Dev.">
        <title>Characterization of gene expression profiles in early bovine pregnancy using a custom cDNA microarray.</title>
        <authorList>
            <person name="Ishiwata H."/>
            <person name="Katsuma S."/>
            <person name="Kizaki K."/>
            <person name="Patel O.V."/>
            <person name="Nakano H."/>
            <person name="Takahashi T."/>
            <person name="Imai K."/>
            <person name="Hirasawa A."/>
            <person name="Shiojima S."/>
            <person name="Ikawa H."/>
            <person name="Suzuki Y."/>
            <person name="Tsujimoto G."/>
            <person name="Izaike Y."/>
            <person name="Todoroki J."/>
            <person name="Hashizume K."/>
        </authorList>
    </citation>
    <scope>NUCLEOTIDE SEQUENCE [MRNA]</scope>
</reference>
<reference key="2">
    <citation type="submission" date="2005-08" db="EMBL/GenBank/DDBJ databases">
        <authorList>
            <consortium name="NIH - Mammalian Gene Collection (MGC) project"/>
        </authorList>
    </citation>
    <scope>NUCLEOTIDE SEQUENCE [LARGE SCALE MRNA]</scope>
    <source>
        <strain>Crossbred X Angus</strain>
        <tissue>Ileum</tissue>
        <tissue>Liver</tissue>
    </source>
</reference>
<reference key="3">
    <citation type="journal article" date="1975" name="Biochemistry">
        <title>The complete amino acid sequence of ubiquitin, an adenylate cyclase stimulating polypeptide probably universal in living cells.</title>
        <authorList>
            <person name="Schlesinger D.H."/>
            <person name="Goldstein G."/>
            <person name="Niall H.D."/>
        </authorList>
    </citation>
    <scope>PROTEIN SEQUENCE OF 1-74</scope>
</reference>
<reference key="4">
    <citation type="journal article" date="1980" name="Biochem. Biophys. Res. Commun.">
        <title>The biosynthesis of ubiquitin by parathyroid gland.</title>
        <authorList>
            <person name="Hamilton J.W."/>
            <person name="Rouse J.B."/>
        </authorList>
    </citation>
    <scope>PROTEIN SEQUENCE OF 1-50</scope>
</reference>
<reference key="5">
    <citation type="journal article" date="1992" name="Eur. J. Biochem.">
        <title>Ganglioside binding proteins of calf brain with ubiquitin-like N-terminals.</title>
        <authorList>
            <person name="Zdebska E."/>
            <person name="Antoniewicz J."/>
            <person name="Nilsson B."/>
            <person name="Sandhoff K."/>
            <person name="Fuerst W."/>
            <person name="Janik P."/>
            <person name="Koscielak J."/>
        </authorList>
    </citation>
    <scope>PROTEIN SEQUENCE OF 1-20</scope>
    <source>
        <tissue>Brain</tissue>
    </source>
</reference>
<proteinExistence type="evidence at protein level"/>
<organism>
    <name type="scientific">Bos taurus</name>
    <name type="common">Bovine</name>
    <dbReference type="NCBI Taxonomy" id="9913"/>
    <lineage>
        <taxon>Eukaryota</taxon>
        <taxon>Metazoa</taxon>
        <taxon>Chordata</taxon>
        <taxon>Craniata</taxon>
        <taxon>Vertebrata</taxon>
        <taxon>Euteleostomi</taxon>
        <taxon>Mammalia</taxon>
        <taxon>Eutheria</taxon>
        <taxon>Laurasiatheria</taxon>
        <taxon>Artiodactyla</taxon>
        <taxon>Ruminantia</taxon>
        <taxon>Pecora</taxon>
        <taxon>Bovidae</taxon>
        <taxon>Bovinae</taxon>
        <taxon>Bos</taxon>
    </lineage>
</organism>
<protein>
    <recommendedName>
        <fullName evidence="6">Ubiquitin-ribosomal protein eL40 fusion protein</fullName>
    </recommendedName>
    <alternativeName>
        <fullName>Ubiquitin A-52 residue ribosomal protein fusion product 1</fullName>
    </alternativeName>
    <component>
        <recommendedName>
            <fullName>Ubiquitin</fullName>
        </recommendedName>
    </component>
    <component>
        <recommendedName>
            <fullName evidence="6">Large ribosomal subunit protein eL40</fullName>
        </recommendedName>
        <alternativeName>
            <fullName>60S ribosomal protein L40</fullName>
        </alternativeName>
        <alternativeName>
            <fullName>CEP52</fullName>
        </alternativeName>
    </component>
</protein>
<evidence type="ECO:0000250" key="1"/>
<evidence type="ECO:0000250" key="2">
    <source>
        <dbReference type="UniProtKB" id="P62984"/>
    </source>
</evidence>
<evidence type="ECO:0000250" key="3">
    <source>
        <dbReference type="UniProtKB" id="P62986"/>
    </source>
</evidence>
<evidence type="ECO:0000250" key="4">
    <source>
        <dbReference type="UniProtKB" id="P62987"/>
    </source>
</evidence>
<evidence type="ECO:0000255" key="5">
    <source>
        <dbReference type="PROSITE-ProRule" id="PRU00214"/>
    </source>
</evidence>
<evidence type="ECO:0000305" key="6"/>
<evidence type="ECO:0007829" key="7">
    <source>
        <dbReference type="PDB" id="4LJO"/>
    </source>
</evidence>
<accession>P63048</accession>
<accession>O97577</accession>
<accession>P02248</accession>
<accession>P02249</accession>
<accession>P02250</accession>
<accession>P62990</accession>
<accession>P80169</accession>
<accession>Q01235</accession>
<accession>Q24K23</accession>
<accession>Q28169</accession>
<accession>Q28170</accession>
<accession>Q29120</accession>
<accession>Q3T0V5</accession>
<accession>Q3ZCE3</accession>
<accession>Q862C1</accession>
<accession>Q862F4</accession>
<accession>Q862M4</accession>
<accession>Q862T5</accession>
<accession>Q862X8</accession>
<accession>Q91887</accession>
<accession>Q91888</accession>
<keyword id="KW-0002">3D-structure</keyword>
<keyword id="KW-0013">ADP-ribosylation</keyword>
<keyword id="KW-0963">Cytoplasm</keyword>
<keyword id="KW-0903">Direct protein sequencing</keyword>
<keyword id="KW-1017">Isopeptide bond</keyword>
<keyword id="KW-0488">Methylation</keyword>
<keyword id="KW-0539">Nucleus</keyword>
<keyword id="KW-0597">Phosphoprotein</keyword>
<keyword id="KW-1185">Reference proteome</keyword>
<keyword id="KW-0687">Ribonucleoprotein</keyword>
<keyword id="KW-0689">Ribosomal protein</keyword>
<keyword id="KW-0832">Ubl conjugation</keyword>
<feature type="chain" id="PRO_0000396432" description="Ubiquitin">
    <location>
        <begin position="1"/>
        <end position="76"/>
    </location>
</feature>
<feature type="chain" id="PRO_0000138748" description="Large ribosomal subunit protein eL40">
    <location>
        <begin position="77"/>
        <end position="128"/>
    </location>
</feature>
<feature type="domain" description="Ubiquitin-like" evidence="5">
    <location>
        <begin position="1"/>
        <end position="76"/>
    </location>
</feature>
<feature type="site" description="Interacts with activating enzyme">
    <location>
        <position position="54"/>
    </location>
</feature>
<feature type="site" description="Essential for function">
    <location>
        <position position="68"/>
    </location>
</feature>
<feature type="site" description="Interacts with activating enzyme">
    <location>
        <position position="72"/>
    </location>
</feature>
<feature type="modified residue" description="Phosphoserine; by PINK1" evidence="4">
    <location>
        <position position="65"/>
    </location>
</feature>
<feature type="modified residue" description="ADP-ribosylglycine" evidence="4">
    <location>
        <position position="76"/>
    </location>
</feature>
<feature type="modified residue" description="N6,N6,N6-trimethyllysine" evidence="3">
    <location>
        <position position="98"/>
    </location>
</feature>
<feature type="cross-link" description="Glycyl lysine isopeptide (Lys-Gly) (interchain with G-Cter in ubiquitin)" evidence="4">
    <location>
        <position position="6"/>
    </location>
</feature>
<feature type="cross-link" description="Glycyl lysine isopeptide (Lys-Gly) (interchain with G-Cter in ubiquitin)" evidence="4">
    <location>
        <position position="11"/>
    </location>
</feature>
<feature type="cross-link" description="Glycyl lysine isopeptide (Lys-Gly) (interchain with G-Cter in ubiquitin)" evidence="4">
    <location>
        <position position="27"/>
    </location>
</feature>
<feature type="cross-link" description="Glycyl lysine isopeptide (Lys-Gly) (interchain with G-Cter in ubiquitin)" evidence="4">
    <location>
        <position position="29"/>
    </location>
</feature>
<feature type="cross-link" description="Glycyl lysine isopeptide (Lys-Gly) (interchain with G-Cter in ubiquitin)" evidence="4">
    <location>
        <position position="33"/>
    </location>
</feature>
<feature type="cross-link" description="Glycyl lysine isopeptide (Lys-Gly) (interchain with G-Cter in ubiquitin)" evidence="4">
    <location>
        <position position="48"/>
    </location>
</feature>
<feature type="cross-link" description="Glycyl lysine isopeptide (Lys-Gly) (interchain with G-Cter in ubiquitin)" evidence="4">
    <location>
        <position position="63"/>
    </location>
</feature>
<feature type="cross-link" description="Glycyl lysine isopeptide (Gly-Lys) (interchain with K-? in acceptor proteins)">
    <location>
        <position position="76"/>
    </location>
</feature>
<feature type="strand" evidence="7">
    <location>
        <begin position="2"/>
        <end position="6"/>
    </location>
</feature>
<feature type="strand" evidence="7">
    <location>
        <begin position="12"/>
        <end position="16"/>
    </location>
</feature>
<feature type="helix" evidence="7">
    <location>
        <begin position="23"/>
        <end position="34"/>
    </location>
</feature>
<feature type="helix" evidence="7">
    <location>
        <begin position="38"/>
        <end position="40"/>
    </location>
</feature>
<feature type="strand" evidence="7">
    <location>
        <begin position="41"/>
        <end position="45"/>
    </location>
</feature>
<feature type="helix" evidence="7">
    <location>
        <begin position="57"/>
        <end position="59"/>
    </location>
</feature>
<feature type="strand" evidence="7">
    <location>
        <begin position="66"/>
        <end position="71"/>
    </location>
</feature>